<accession>Q4KMA2</accession>
<accession>Q0D2G8</accession>
<accession>Q5CZZ8</accession>
<accession>Q6IRD5</accession>
<gene>
    <name type="primary">Rad23b</name>
</gene>
<feature type="chain" id="PRO_0000287582" description="UV excision repair protein RAD23 homolog B">
    <location>
        <begin position="1"/>
        <end position="415"/>
    </location>
</feature>
<feature type="domain" description="Ubiquitin-like" evidence="3">
    <location>
        <begin position="1"/>
        <end position="79"/>
    </location>
</feature>
<feature type="domain" description="UBA 1" evidence="2">
    <location>
        <begin position="188"/>
        <end position="228"/>
    </location>
</feature>
<feature type="domain" description="STI1">
    <location>
        <begin position="274"/>
        <end position="317"/>
    </location>
</feature>
<feature type="domain" description="UBA 2" evidence="2">
    <location>
        <begin position="370"/>
        <end position="410"/>
    </location>
</feature>
<feature type="region of interest" description="Disordered" evidence="4">
    <location>
        <begin position="80"/>
        <end position="175"/>
    </location>
</feature>
<feature type="region of interest" description="Disordered" evidence="4">
    <location>
        <begin position="334"/>
        <end position="355"/>
    </location>
</feature>
<feature type="compositionally biased region" description="Low complexity" evidence="4">
    <location>
        <begin position="84"/>
        <end position="143"/>
    </location>
</feature>
<feature type="compositionally biased region" description="Gly residues" evidence="4">
    <location>
        <begin position="336"/>
        <end position="355"/>
    </location>
</feature>
<feature type="modified residue" description="Phosphothreonine" evidence="7">
    <location>
        <position position="155"/>
    </location>
</feature>
<feature type="modified residue" description="Phosphoserine" evidence="7">
    <location>
        <position position="160"/>
    </location>
</feature>
<feature type="modified residue" description="Phosphoserine" evidence="6">
    <location>
        <position position="174"/>
    </location>
</feature>
<feature type="modified residue" description="Phosphothreonine" evidence="6">
    <location>
        <position position="186"/>
    </location>
</feature>
<feature type="modified residue" description="Phosphoserine" evidence="6">
    <location>
        <position position="199"/>
    </location>
</feature>
<feature type="modified residue" description="Phosphotyrosine" evidence="6">
    <location>
        <position position="202"/>
    </location>
</feature>
<dbReference type="EMBL" id="BC070960">
    <property type="protein sequence ID" value="AAH70960.1"/>
    <property type="molecule type" value="mRNA"/>
</dbReference>
<dbReference type="EMBL" id="BC090351">
    <property type="protein sequence ID" value="AAH90351.1"/>
    <property type="molecule type" value="mRNA"/>
</dbReference>
<dbReference type="EMBL" id="BC098674">
    <property type="protein sequence ID" value="AAH98674.1"/>
    <property type="molecule type" value="mRNA"/>
</dbReference>
<dbReference type="EMBL" id="BC111406">
    <property type="protein sequence ID" value="AAI11407.1"/>
    <property type="molecule type" value="mRNA"/>
</dbReference>
<dbReference type="RefSeq" id="NP_001020446.1">
    <property type="nucleotide sequence ID" value="NM_001025275.1"/>
</dbReference>
<dbReference type="BMRB" id="Q4KMA2"/>
<dbReference type="SMR" id="Q4KMA2"/>
<dbReference type="BioGRID" id="255730">
    <property type="interactions" value="63"/>
</dbReference>
<dbReference type="FunCoup" id="Q4KMA2">
    <property type="interactions" value="4206"/>
</dbReference>
<dbReference type="IntAct" id="Q4KMA2">
    <property type="interactions" value="53"/>
</dbReference>
<dbReference type="STRING" id="10116.ENSRNOP00000021629"/>
<dbReference type="GlyGen" id="Q4KMA2">
    <property type="glycosylation" value="5 sites, 1 O-linked glycan (1 site)"/>
</dbReference>
<dbReference type="iPTMnet" id="Q4KMA2"/>
<dbReference type="PhosphoSitePlus" id="Q4KMA2"/>
<dbReference type="jPOST" id="Q4KMA2"/>
<dbReference type="PaxDb" id="10116-ENSRNOP00000021629"/>
<dbReference type="Ensembl" id="ENSRNOT00000021629.7">
    <property type="protein sequence ID" value="ENSRNOP00000021629.4"/>
    <property type="gene ID" value="ENSRNOG00000016137.7"/>
</dbReference>
<dbReference type="GeneID" id="298012"/>
<dbReference type="KEGG" id="rno:298012"/>
<dbReference type="UCSC" id="RGD:1562958">
    <property type="organism name" value="rat"/>
</dbReference>
<dbReference type="AGR" id="RGD:1562958"/>
<dbReference type="CTD" id="5887"/>
<dbReference type="RGD" id="1562958">
    <property type="gene designation" value="Rad23b"/>
</dbReference>
<dbReference type="eggNOG" id="KOG0011">
    <property type="taxonomic scope" value="Eukaryota"/>
</dbReference>
<dbReference type="GeneTree" id="ENSGT00390000012078"/>
<dbReference type="HOGENOM" id="CLU_040364_0_1_1"/>
<dbReference type="InParanoid" id="Q4KMA2"/>
<dbReference type="OMA" id="PHMLEPI"/>
<dbReference type="OrthoDB" id="419317at2759"/>
<dbReference type="PhylomeDB" id="Q4KMA2"/>
<dbReference type="TreeFam" id="TF101216"/>
<dbReference type="Reactome" id="R-RNO-532668">
    <property type="pathway name" value="N-glycan trimming in the ER and Calnexin/Calreticulin cycle"/>
</dbReference>
<dbReference type="Reactome" id="R-RNO-5689877">
    <property type="pathway name" value="Josephin domain DUBs"/>
</dbReference>
<dbReference type="Reactome" id="R-RNO-5696394">
    <property type="pathway name" value="DNA Damage Recognition in GG-NER"/>
</dbReference>
<dbReference type="Reactome" id="R-RNO-5696395">
    <property type="pathway name" value="Formation of Incision Complex in GG-NER"/>
</dbReference>
<dbReference type="PRO" id="PR:Q4KMA2"/>
<dbReference type="Proteomes" id="UP000002494">
    <property type="component" value="Chromosome 5"/>
</dbReference>
<dbReference type="Bgee" id="ENSRNOG00000016137">
    <property type="expression patterns" value="Expressed in skeletal muscle tissue and 19 other cell types or tissues"/>
</dbReference>
<dbReference type="GO" id="GO:0005737">
    <property type="term" value="C:cytoplasm"/>
    <property type="evidence" value="ECO:0000266"/>
    <property type="project" value="RGD"/>
</dbReference>
<dbReference type="GO" id="GO:0005829">
    <property type="term" value="C:cytosol"/>
    <property type="evidence" value="ECO:0000318"/>
    <property type="project" value="GO_Central"/>
</dbReference>
<dbReference type="GO" id="GO:0005654">
    <property type="term" value="C:nucleoplasm"/>
    <property type="evidence" value="ECO:0000318"/>
    <property type="project" value="GO_Central"/>
</dbReference>
<dbReference type="GO" id="GO:0005634">
    <property type="term" value="C:nucleus"/>
    <property type="evidence" value="ECO:0000266"/>
    <property type="project" value="RGD"/>
</dbReference>
<dbReference type="GO" id="GO:0000502">
    <property type="term" value="C:proteasome complex"/>
    <property type="evidence" value="ECO:0007669"/>
    <property type="project" value="UniProtKB-KW"/>
</dbReference>
<dbReference type="GO" id="GO:0071942">
    <property type="term" value="C:XPC complex"/>
    <property type="evidence" value="ECO:0000250"/>
    <property type="project" value="UniProtKB"/>
</dbReference>
<dbReference type="GO" id="GO:0003684">
    <property type="term" value="F:damaged DNA binding"/>
    <property type="evidence" value="ECO:0007669"/>
    <property type="project" value="InterPro"/>
</dbReference>
<dbReference type="GO" id="GO:0140612">
    <property type="term" value="F:DNA damage sensor activity"/>
    <property type="evidence" value="ECO:0000266"/>
    <property type="project" value="RGD"/>
</dbReference>
<dbReference type="GO" id="GO:0031593">
    <property type="term" value="F:polyubiquitin modification-dependent protein binding"/>
    <property type="evidence" value="ECO:0000266"/>
    <property type="project" value="RGD"/>
</dbReference>
<dbReference type="GO" id="GO:0070628">
    <property type="term" value="F:proteasome binding"/>
    <property type="evidence" value="ECO:0000318"/>
    <property type="project" value="GO_Central"/>
</dbReference>
<dbReference type="GO" id="GO:0000978">
    <property type="term" value="F:RNA polymerase II cis-regulatory region sequence-specific DNA binding"/>
    <property type="evidence" value="ECO:0000266"/>
    <property type="project" value="RGD"/>
</dbReference>
<dbReference type="GO" id="GO:0061629">
    <property type="term" value="F:RNA polymerase II-specific DNA-binding transcription factor binding"/>
    <property type="evidence" value="ECO:0000266"/>
    <property type="project" value="RGD"/>
</dbReference>
<dbReference type="GO" id="GO:0000976">
    <property type="term" value="F:transcription cis-regulatory region binding"/>
    <property type="evidence" value="ECO:0000266"/>
    <property type="project" value="RGD"/>
</dbReference>
<dbReference type="GO" id="GO:0043130">
    <property type="term" value="F:ubiquitin binding"/>
    <property type="evidence" value="ECO:0000318"/>
    <property type="project" value="GO_Central"/>
</dbReference>
<dbReference type="GO" id="GO:0098761">
    <property type="term" value="P:cellular response to interleukin-7"/>
    <property type="evidence" value="ECO:0000266"/>
    <property type="project" value="RGD"/>
</dbReference>
<dbReference type="GO" id="GO:0006974">
    <property type="term" value="P:DNA damage response"/>
    <property type="evidence" value="ECO:0000266"/>
    <property type="project" value="RGD"/>
</dbReference>
<dbReference type="GO" id="GO:0048568">
    <property type="term" value="P:embryonic organ development"/>
    <property type="evidence" value="ECO:0000270"/>
    <property type="project" value="RGD"/>
</dbReference>
<dbReference type="GO" id="GO:0006289">
    <property type="term" value="P:nucleotide-excision repair"/>
    <property type="evidence" value="ECO:0000266"/>
    <property type="project" value="RGD"/>
</dbReference>
<dbReference type="GO" id="GO:0043161">
    <property type="term" value="P:proteasome-mediated ubiquitin-dependent protein catabolic process"/>
    <property type="evidence" value="ECO:0000318"/>
    <property type="project" value="GO_Central"/>
</dbReference>
<dbReference type="GO" id="GO:0032434">
    <property type="term" value="P:regulation of proteasomal ubiquitin-dependent protein catabolic process"/>
    <property type="evidence" value="ECO:0000266"/>
    <property type="project" value="RGD"/>
</dbReference>
<dbReference type="GO" id="GO:0007283">
    <property type="term" value="P:spermatogenesis"/>
    <property type="evidence" value="ECO:0000266"/>
    <property type="project" value="RGD"/>
</dbReference>
<dbReference type="CDD" id="cd14377">
    <property type="entry name" value="UBA1_Rad23"/>
    <property type="match status" value="1"/>
</dbReference>
<dbReference type="CDD" id="cd14428">
    <property type="entry name" value="UBA2_HR23B"/>
    <property type="match status" value="1"/>
</dbReference>
<dbReference type="CDD" id="cd16126">
    <property type="entry name" value="Ubl_HR23B"/>
    <property type="match status" value="1"/>
</dbReference>
<dbReference type="FunFam" id="1.10.10.540:FF:000001">
    <property type="entry name" value="UV excision repair protein RAD23 B"/>
    <property type="match status" value="1"/>
</dbReference>
<dbReference type="FunFam" id="1.10.8.10:FF:000002">
    <property type="entry name" value="UV excision repair protein RAD23 homolog"/>
    <property type="match status" value="1"/>
</dbReference>
<dbReference type="FunFam" id="1.10.8.10:FF:000003">
    <property type="entry name" value="UV excision repair protein RAD23 homolog"/>
    <property type="match status" value="1"/>
</dbReference>
<dbReference type="FunFam" id="3.10.20.90:FF:000053">
    <property type="entry name" value="UV excision repair protein RAD23 homolog A"/>
    <property type="match status" value="1"/>
</dbReference>
<dbReference type="Gene3D" id="1.10.8.10">
    <property type="entry name" value="DNA helicase RuvA subunit, C-terminal domain"/>
    <property type="match status" value="2"/>
</dbReference>
<dbReference type="Gene3D" id="3.10.20.90">
    <property type="entry name" value="Phosphatidylinositol 3-kinase Catalytic Subunit, Chain A, domain 1"/>
    <property type="match status" value="1"/>
</dbReference>
<dbReference type="Gene3D" id="1.10.10.540">
    <property type="entry name" value="XPC-binding domain"/>
    <property type="match status" value="1"/>
</dbReference>
<dbReference type="InterPro" id="IPR004806">
    <property type="entry name" value="Rad23"/>
</dbReference>
<dbReference type="InterPro" id="IPR041811">
    <property type="entry name" value="RAD23A/B_UBA1"/>
</dbReference>
<dbReference type="InterPro" id="IPR006636">
    <property type="entry name" value="STI1_HS-bd"/>
</dbReference>
<dbReference type="InterPro" id="IPR015940">
    <property type="entry name" value="UBA"/>
</dbReference>
<dbReference type="InterPro" id="IPR009060">
    <property type="entry name" value="UBA-like_sf"/>
</dbReference>
<dbReference type="InterPro" id="IPR000626">
    <property type="entry name" value="Ubiquitin-like_dom"/>
</dbReference>
<dbReference type="InterPro" id="IPR029071">
    <property type="entry name" value="Ubiquitin-like_domsf"/>
</dbReference>
<dbReference type="InterPro" id="IPR015360">
    <property type="entry name" value="XPC-bd"/>
</dbReference>
<dbReference type="InterPro" id="IPR036353">
    <property type="entry name" value="XPC-bd_sf"/>
</dbReference>
<dbReference type="NCBIfam" id="TIGR00601">
    <property type="entry name" value="rad23"/>
    <property type="match status" value="1"/>
</dbReference>
<dbReference type="PANTHER" id="PTHR10621">
    <property type="entry name" value="UV EXCISION REPAIR PROTEIN RAD23"/>
    <property type="match status" value="1"/>
</dbReference>
<dbReference type="PANTHER" id="PTHR10621:SF13">
    <property type="entry name" value="UV EXCISION REPAIR PROTEIN RAD23 HOMOLOG B"/>
    <property type="match status" value="1"/>
</dbReference>
<dbReference type="Pfam" id="PF00627">
    <property type="entry name" value="UBA"/>
    <property type="match status" value="2"/>
</dbReference>
<dbReference type="Pfam" id="PF00240">
    <property type="entry name" value="ubiquitin"/>
    <property type="match status" value="1"/>
</dbReference>
<dbReference type="Pfam" id="PF09280">
    <property type="entry name" value="XPC-binding"/>
    <property type="match status" value="1"/>
</dbReference>
<dbReference type="PRINTS" id="PR01839">
    <property type="entry name" value="RAD23PROTEIN"/>
</dbReference>
<dbReference type="SMART" id="SM00727">
    <property type="entry name" value="STI1"/>
    <property type="match status" value="1"/>
</dbReference>
<dbReference type="SMART" id="SM00165">
    <property type="entry name" value="UBA"/>
    <property type="match status" value="2"/>
</dbReference>
<dbReference type="SMART" id="SM00213">
    <property type="entry name" value="UBQ"/>
    <property type="match status" value="1"/>
</dbReference>
<dbReference type="SUPFAM" id="SSF46934">
    <property type="entry name" value="UBA-like"/>
    <property type="match status" value="2"/>
</dbReference>
<dbReference type="SUPFAM" id="SSF54236">
    <property type="entry name" value="Ubiquitin-like"/>
    <property type="match status" value="1"/>
</dbReference>
<dbReference type="SUPFAM" id="SSF101238">
    <property type="entry name" value="XPC-binding domain"/>
    <property type="match status" value="1"/>
</dbReference>
<dbReference type="PROSITE" id="PS50030">
    <property type="entry name" value="UBA"/>
    <property type="match status" value="2"/>
</dbReference>
<dbReference type="PROSITE" id="PS50053">
    <property type="entry name" value="UBIQUITIN_2"/>
    <property type="match status" value="1"/>
</dbReference>
<evidence type="ECO:0000250" key="1"/>
<evidence type="ECO:0000255" key="2">
    <source>
        <dbReference type="PROSITE-ProRule" id="PRU00212"/>
    </source>
</evidence>
<evidence type="ECO:0000255" key="3">
    <source>
        <dbReference type="PROSITE-ProRule" id="PRU00214"/>
    </source>
</evidence>
<evidence type="ECO:0000256" key="4">
    <source>
        <dbReference type="SAM" id="MobiDB-lite"/>
    </source>
</evidence>
<evidence type="ECO:0000305" key="5"/>
<evidence type="ECO:0007744" key="6">
    <source>
    </source>
</evidence>
<evidence type="ECO:0007744" key="7">
    <source>
    </source>
</evidence>
<organism>
    <name type="scientific">Rattus norvegicus</name>
    <name type="common">Rat</name>
    <dbReference type="NCBI Taxonomy" id="10116"/>
    <lineage>
        <taxon>Eukaryota</taxon>
        <taxon>Metazoa</taxon>
        <taxon>Chordata</taxon>
        <taxon>Craniata</taxon>
        <taxon>Vertebrata</taxon>
        <taxon>Euteleostomi</taxon>
        <taxon>Mammalia</taxon>
        <taxon>Eutheria</taxon>
        <taxon>Euarchontoglires</taxon>
        <taxon>Glires</taxon>
        <taxon>Rodentia</taxon>
        <taxon>Myomorpha</taxon>
        <taxon>Muroidea</taxon>
        <taxon>Muridae</taxon>
        <taxon>Murinae</taxon>
        <taxon>Rattus</taxon>
    </lineage>
</organism>
<keyword id="KW-0963">Cytoplasm</keyword>
<keyword id="KW-0903">Direct protein sequencing</keyword>
<keyword id="KW-0227">DNA damage</keyword>
<keyword id="KW-0234">DNA repair</keyword>
<keyword id="KW-0539">Nucleus</keyword>
<keyword id="KW-0597">Phosphoprotein</keyword>
<keyword id="KW-0647">Proteasome</keyword>
<keyword id="KW-1185">Reference proteome</keyword>
<keyword id="KW-0677">Repeat</keyword>
<keyword id="KW-0833">Ubl conjugation pathway</keyword>
<name>RD23B_RAT</name>
<sequence length="415" mass="43497">MQVTLKTLQQQTFKIDIDPEETVKALKEKIESEKGKDAFPVAGQKLIYAGKILSDDTALKEYKIDEKNFVVVMVTKPKAVTSAVPATTQQSSSPSTTTVSSSPAAAVAQAPAPTPALAPTSTPASTTPASTTASSEPAPTGATQPEKPAEKPAQTPVLTSPAPADSTPGDSSRSNLFEDATSALVTGQSYENMVTEIMSMGYEREQVIAALRASFNNPDRAVEYLLMGIPGDRESQAVVDPPPQAVSTGTPQSPAVAAAAATTTATTTTTSGGHPLEFLRNQPQFQQMRQIIQQNPSLLPALLQQIGRENPQLLQQISQHQEHFIQMLNEPVQEAGGQGGGGGGGGGGGGGGGGIAEAGSGHMNYIQVTPQEKEAIERLKALGFPEGLVIQAYFACEKNENLAANFLLQQNFDED</sequence>
<protein>
    <recommendedName>
        <fullName>UV excision repair protein RAD23 homolog B</fullName>
    </recommendedName>
</protein>
<reference key="1">
    <citation type="journal article" date="2004" name="Genome Res.">
        <title>The status, quality, and expansion of the NIH full-length cDNA project: the Mammalian Gene Collection (MGC).</title>
        <authorList>
            <consortium name="The MGC Project Team"/>
        </authorList>
    </citation>
    <scope>NUCLEOTIDE SEQUENCE [LARGE SCALE MRNA]</scope>
    <source>
        <tissue>Brain</tissue>
        <tissue>Heart</tissue>
        <tissue>Lung</tissue>
        <tissue>Placenta</tissue>
    </source>
</reference>
<reference key="2">
    <citation type="submission" date="2007-09" db="UniProtKB">
        <authorList>
            <person name="Lubec G."/>
            <person name="Chen W.-Q."/>
            <person name="Kang S.U."/>
            <person name="Lubec S."/>
        </authorList>
    </citation>
    <scope>PROTEIN SEQUENCE OF 7-14; 37-45; 52-60 AND 205-212</scope>
    <scope>IDENTIFICATION BY MASS SPECTROMETRY</scope>
    <source>
        <strain>Sprague-Dawley</strain>
        <tissue>Brain</tissue>
        <tissue>Hippocampus</tissue>
    </source>
</reference>
<reference key="3">
    <citation type="journal article" date="2006" name="Proc. Natl. Acad. Sci. U.S.A.">
        <title>Quantitative phosphoproteomics of vasopressin-sensitive renal cells: regulation of aquaporin-2 phosphorylation at two sites.</title>
        <authorList>
            <person name="Hoffert J.D."/>
            <person name="Pisitkun T."/>
            <person name="Wang G."/>
            <person name="Shen R.-F."/>
            <person name="Knepper M.A."/>
        </authorList>
    </citation>
    <scope>PHOSPHORYLATION [LARGE SCALE ANALYSIS] AT SER-174; THR-186; SER-199 AND TYR-202</scope>
    <scope>IDENTIFICATION BY MASS SPECTROMETRY [LARGE SCALE ANALYSIS]</scope>
</reference>
<reference key="4">
    <citation type="journal article" date="2012" name="Nat. Commun.">
        <title>Quantitative maps of protein phosphorylation sites across 14 different rat organs and tissues.</title>
        <authorList>
            <person name="Lundby A."/>
            <person name="Secher A."/>
            <person name="Lage K."/>
            <person name="Nordsborg N.B."/>
            <person name="Dmytriyev A."/>
            <person name="Lundby C."/>
            <person name="Olsen J.V."/>
        </authorList>
    </citation>
    <scope>PHOSPHORYLATION [LARGE SCALE ANALYSIS] AT THR-155 AND SER-160</scope>
    <scope>IDENTIFICATION BY MASS SPECTROMETRY [LARGE SCALE ANALYSIS]</scope>
</reference>
<proteinExistence type="evidence at protein level"/>
<comment type="function">
    <text evidence="1">Multiubiquitin chain receptor involved in modulation of proteasomal degradation. Binds to polyubiquitin chains. Proposed to be capable to bind simultaneously to the 26S proteasome and to polyubiquitinated substrates and to deliver ubiquitinated proteins to the proteasome. May play a role in endoplasmic reticulum-associated degradation (ERAD) of misfolded glycoproteins by association with PNGase and delivering deglycosylated proteins to the proteasome (By similarity).</text>
</comment>
<comment type="function">
    <text evidence="1">Involved in global genome nucleotide excision repair (GG-NER) by acting as component of the XPC complex. Cooperatively with Cetn2 appears to stabilize Xpc. May protect Xpc from proteasomal degradation (By similarity).</text>
</comment>
<comment type="function">
    <text evidence="1">The XPC complex is proposed to represent the first factor bound at the sites of DNA damage and together with other core recognition factors, Xpa, RPA and the TFIIH complex, is part of the pre-incision (or initial recognition) complex. The XPC complex recognizes a wide spectrum of damaged DNA characterized by distortions of the DNA helix such as single-stranded loops, mismatched bubbles or single-stranded overhangs. The orientation of XPC complex binding appears to be crucial for inducing a productive NER. XPC complex is proposed to recognize and to interact with unpaired bases on the undamaged DNA strand which is followed by recruitment of the TFIIH complex and subsequent scanning for lesions in the opposite strand in a 5'-to-3' direction by the NER machinery. Cyclobutane pyrimidine dimers (CPDs) which are formed upon UV-induced DNA damage esacpe detection by the XPC complex due to a low degree of structural perurbation. Instead they are detected by the UV-DDB complex which in turn recruits and cooperates with the XPC complex in the respective DNA repair. In vitro, the XPC:RAD23B dimer is sufficient to initiate NER; it preferentially binds to cisplatin and UV-damaged double-stranded DNA and also binds to a variety of chemically and structurally diverse DNA adducts. XPC:RAD23B contacts DNA both 5' and 3' of a cisplatin lesion with a preference for the 5' side. Xpc:Rad22b induces a bend in DNA upon binding. Xpc:Rad23b stimulates the activity of DNA glycosylases Tdg and Smug1 (By similarity).</text>
</comment>
<comment type="subunit">
    <text evidence="1">Component of the XPC complex composed of XPC, RAD23B and CETN2. Interacts with NGLY1 and PSMC1. Interacts with ATXN3. Interacts with AMFR. Interacts with VCP; the interaction is indirect and mediated by NGLY1 (By similarity).</text>
</comment>
<comment type="subcellular location">
    <subcellularLocation>
        <location evidence="1">Nucleus</location>
    </subcellularLocation>
    <subcellularLocation>
        <location evidence="1">Cytoplasm</location>
    </subcellularLocation>
</comment>
<comment type="similarity">
    <text evidence="5">Belongs to the RAD23 family.</text>
</comment>